<feature type="chain" id="PRO_1000013386" description="Large ribosomal subunit protein bL34">
    <location>
        <begin position="1"/>
        <end position="44"/>
    </location>
</feature>
<name>RL34_NITHX</name>
<keyword id="KW-1185">Reference proteome</keyword>
<keyword id="KW-0687">Ribonucleoprotein</keyword>
<keyword id="KW-0689">Ribosomal protein</keyword>
<dbReference type="EMBL" id="CP000319">
    <property type="protein sequence ID" value="ABE64431.1"/>
    <property type="molecule type" value="Genomic_DNA"/>
</dbReference>
<dbReference type="RefSeq" id="WP_011512070.1">
    <property type="nucleotide sequence ID" value="NC_007964.1"/>
</dbReference>
<dbReference type="SMR" id="Q1QH66"/>
<dbReference type="STRING" id="323097.Nham_3705"/>
<dbReference type="KEGG" id="nha:Nham_3705"/>
<dbReference type="eggNOG" id="COG0230">
    <property type="taxonomic scope" value="Bacteria"/>
</dbReference>
<dbReference type="HOGENOM" id="CLU_129938_2_0_5"/>
<dbReference type="Proteomes" id="UP000001953">
    <property type="component" value="Chromosome"/>
</dbReference>
<dbReference type="GO" id="GO:1990904">
    <property type="term" value="C:ribonucleoprotein complex"/>
    <property type="evidence" value="ECO:0007669"/>
    <property type="project" value="UniProtKB-KW"/>
</dbReference>
<dbReference type="GO" id="GO:0005840">
    <property type="term" value="C:ribosome"/>
    <property type="evidence" value="ECO:0007669"/>
    <property type="project" value="UniProtKB-KW"/>
</dbReference>
<dbReference type="GO" id="GO:0003735">
    <property type="term" value="F:structural constituent of ribosome"/>
    <property type="evidence" value="ECO:0007669"/>
    <property type="project" value="InterPro"/>
</dbReference>
<dbReference type="GO" id="GO:0006412">
    <property type="term" value="P:translation"/>
    <property type="evidence" value="ECO:0007669"/>
    <property type="project" value="UniProtKB-UniRule"/>
</dbReference>
<dbReference type="FunFam" id="1.10.287.3980:FF:000001">
    <property type="entry name" value="Mitochondrial ribosomal protein L34"/>
    <property type="match status" value="1"/>
</dbReference>
<dbReference type="Gene3D" id="1.10.287.3980">
    <property type="match status" value="1"/>
</dbReference>
<dbReference type="HAMAP" id="MF_00391">
    <property type="entry name" value="Ribosomal_bL34"/>
    <property type="match status" value="1"/>
</dbReference>
<dbReference type="InterPro" id="IPR000271">
    <property type="entry name" value="Ribosomal_bL34"/>
</dbReference>
<dbReference type="InterPro" id="IPR020939">
    <property type="entry name" value="Ribosomal_bL34_CS"/>
</dbReference>
<dbReference type="NCBIfam" id="TIGR01030">
    <property type="entry name" value="rpmH_bact"/>
    <property type="match status" value="1"/>
</dbReference>
<dbReference type="PANTHER" id="PTHR14503:SF4">
    <property type="entry name" value="LARGE RIBOSOMAL SUBUNIT PROTEIN BL34M"/>
    <property type="match status" value="1"/>
</dbReference>
<dbReference type="PANTHER" id="PTHR14503">
    <property type="entry name" value="MITOCHONDRIAL RIBOSOMAL PROTEIN 34 FAMILY MEMBER"/>
    <property type="match status" value="1"/>
</dbReference>
<dbReference type="Pfam" id="PF00468">
    <property type="entry name" value="Ribosomal_L34"/>
    <property type="match status" value="1"/>
</dbReference>
<dbReference type="PROSITE" id="PS00784">
    <property type="entry name" value="RIBOSOMAL_L34"/>
    <property type="match status" value="1"/>
</dbReference>
<organism>
    <name type="scientific">Nitrobacter hamburgensis (strain DSM 10229 / NCIMB 13809 / X14)</name>
    <dbReference type="NCBI Taxonomy" id="323097"/>
    <lineage>
        <taxon>Bacteria</taxon>
        <taxon>Pseudomonadati</taxon>
        <taxon>Pseudomonadota</taxon>
        <taxon>Alphaproteobacteria</taxon>
        <taxon>Hyphomicrobiales</taxon>
        <taxon>Nitrobacteraceae</taxon>
        <taxon>Nitrobacter</taxon>
    </lineage>
</organism>
<sequence length="44" mass="5134">MKRTYQPSKLVRKRRHGFRARLATTGGRKILAARRARGRKRLSA</sequence>
<comment type="similarity">
    <text evidence="1">Belongs to the bacterial ribosomal protein bL34 family.</text>
</comment>
<reference key="1">
    <citation type="submission" date="2006-03" db="EMBL/GenBank/DDBJ databases">
        <title>Complete sequence of chromosome of Nitrobacter hamburgensis X14.</title>
        <authorList>
            <consortium name="US DOE Joint Genome Institute"/>
            <person name="Copeland A."/>
            <person name="Lucas S."/>
            <person name="Lapidus A."/>
            <person name="Barry K."/>
            <person name="Detter J.C."/>
            <person name="Glavina del Rio T."/>
            <person name="Hammon N."/>
            <person name="Israni S."/>
            <person name="Dalin E."/>
            <person name="Tice H."/>
            <person name="Pitluck S."/>
            <person name="Chain P."/>
            <person name="Malfatti S."/>
            <person name="Shin M."/>
            <person name="Vergez L."/>
            <person name="Schmutz J."/>
            <person name="Larimer F."/>
            <person name="Land M."/>
            <person name="Hauser L."/>
            <person name="Kyrpides N."/>
            <person name="Ivanova N."/>
            <person name="Ward B."/>
            <person name="Arp D."/>
            <person name="Klotz M."/>
            <person name="Stein L."/>
            <person name="O'Mullan G."/>
            <person name="Starkenburg S."/>
            <person name="Sayavedra L."/>
            <person name="Poret-Peterson A.T."/>
            <person name="Gentry M.E."/>
            <person name="Bruce D."/>
            <person name="Richardson P."/>
        </authorList>
    </citation>
    <scope>NUCLEOTIDE SEQUENCE [LARGE SCALE GENOMIC DNA]</scope>
    <source>
        <strain>DSM 10229 / NCIMB 13809 / X14</strain>
    </source>
</reference>
<protein>
    <recommendedName>
        <fullName evidence="1">Large ribosomal subunit protein bL34</fullName>
    </recommendedName>
    <alternativeName>
        <fullName evidence="2">50S ribosomal protein L34</fullName>
    </alternativeName>
</protein>
<accession>Q1QH66</accession>
<evidence type="ECO:0000255" key="1">
    <source>
        <dbReference type="HAMAP-Rule" id="MF_00391"/>
    </source>
</evidence>
<evidence type="ECO:0000305" key="2"/>
<gene>
    <name evidence="1" type="primary">rpmH</name>
    <name type="ordered locus">Nham_3705</name>
</gene>
<proteinExistence type="inferred from homology"/>